<organism>
    <name type="scientific">Crotalus atrox</name>
    <name type="common">Western diamondback rattlesnake</name>
    <dbReference type="NCBI Taxonomy" id="8730"/>
    <lineage>
        <taxon>Eukaryota</taxon>
        <taxon>Metazoa</taxon>
        <taxon>Chordata</taxon>
        <taxon>Craniata</taxon>
        <taxon>Vertebrata</taxon>
        <taxon>Euteleostomi</taxon>
        <taxon>Lepidosauria</taxon>
        <taxon>Squamata</taxon>
        <taxon>Bifurcata</taxon>
        <taxon>Unidentata</taxon>
        <taxon>Episquamata</taxon>
        <taxon>Toxicofera</taxon>
        <taxon>Serpentes</taxon>
        <taxon>Colubroidea</taxon>
        <taxon>Viperidae</taxon>
        <taxon>Crotalinae</taxon>
        <taxon>Crotalus</taxon>
    </lineage>
</organism>
<comment type="function">
    <text evidence="4">Galactose-binding protein which recognizes specific carbohydrate structures and agglutinates a variety of animal cells by binding to cell-surface glycoproteins and glycolipids. Calcium-dependent lectin. Shows high hemagglutinating activity (MHC=10 ng/ml) (PubMed:1989986).</text>
</comment>
<comment type="subunit">
    <text evidence="2">Homodecamer of disulfide-linked dimers arranged in two pseudo-5-fold symmetric pentamers.</text>
</comment>
<comment type="subcellular location">
    <subcellularLocation>
        <location evidence="4">Secreted</location>
    </subcellularLocation>
</comment>
<comment type="tissue specificity">
    <text evidence="7">Expressed by the venom gland.</text>
</comment>
<comment type="mass spectrometry" mass="16284.0" method="Unknown" evidence="3">
    <text>Average mass.</text>
</comment>
<comment type="similarity">
    <text evidence="6">Belongs to the true venom lectin family.</text>
</comment>
<accession>P21963</accession>
<protein>
    <recommendedName>
        <fullName>C-type lectin Cal</fullName>
        <shortName>CTL</shortName>
    </recommendedName>
    <alternativeName>
        <fullName evidence="5">Galactose-specific lectin</fullName>
    </alternativeName>
    <alternativeName>
        <fullName evidence="5">Rattlesnake lectin</fullName>
        <shortName evidence="5">RSL</shortName>
    </alternativeName>
</protein>
<reference key="1">
    <citation type="journal article" date="1991" name="J. Biol. Chem.">
        <title>Complete primary structure of a galactose-specific lectin from the venom of the rattlesnake Crotalus atrox. Homologies with Ca2(+)-dependent-type lectins.</title>
        <authorList>
            <person name="Hirabayashi J."/>
            <person name="Kusunoki T."/>
            <person name="Kasai K."/>
        </authorList>
    </citation>
    <scope>PROTEIN SEQUENCE</scope>
    <scope>FUNCTION</scope>
    <scope>SUBCELLULAR LOCATION</scope>
    <source>
        <tissue>Venom</tissue>
    </source>
</reference>
<reference key="2">
    <citation type="journal article" date="2009" name="J. Proteome Res.">
        <title>Exploring the venom proteome of the western diamondback rattlesnake, Crotalus atrox, via snake venomics and combinatorial peptide ligand library approaches.</title>
        <authorList>
            <person name="Calvete J.J."/>
            <person name="Fasoli E."/>
            <person name="Sanz L."/>
            <person name="Boschetti E."/>
            <person name="Righetti P.G."/>
        </authorList>
    </citation>
    <scope>PROTEIN SEQUENCE OF 1-22; 34-61; 62-71; 76-84 AND 104-126</scope>
    <scope>MASS SPECTROMETRY</scope>
    <source>
        <tissue>Venom</tissue>
    </source>
</reference>
<reference key="3">
    <citation type="journal article" date="2004" name="Biochemistry">
        <title>X-ray crystal structure of a galactose-specific C-type lectin possessing a novel decameric quaternary structure.</title>
        <authorList>
            <person name="Walker J.R."/>
            <person name="Nagar B."/>
            <person name="Young N.M."/>
            <person name="Hirama T."/>
            <person name="Rini J.M."/>
        </authorList>
    </citation>
    <scope>X-RAY CRYSTALLOGRAPHY (2.2 ANGSTROMS) IN COMPLEX WITH LACTOSE AND 2-THIODIGALACTOSIDE</scope>
    <scope>DISULFIDE BOND</scope>
    <scope>SUBUNIT</scope>
</reference>
<evidence type="ECO:0000255" key="1">
    <source>
        <dbReference type="PROSITE-ProRule" id="PRU00040"/>
    </source>
</evidence>
<evidence type="ECO:0000269" key="2">
    <source>
    </source>
</evidence>
<evidence type="ECO:0000269" key="3">
    <source>
    </source>
</evidence>
<evidence type="ECO:0000269" key="4">
    <source>
    </source>
</evidence>
<evidence type="ECO:0000303" key="5">
    <source>
    </source>
</evidence>
<evidence type="ECO:0000305" key="6"/>
<evidence type="ECO:0000305" key="7">
    <source>
    </source>
</evidence>
<evidence type="ECO:0007744" key="8">
    <source>
        <dbReference type="PDB" id="1JZN"/>
    </source>
</evidence>
<evidence type="ECO:0007744" key="9">
    <source>
        <dbReference type="PDB" id="1MUQ"/>
    </source>
</evidence>
<evidence type="ECO:0007829" key="10">
    <source>
        <dbReference type="PDB" id="1JZN"/>
    </source>
</evidence>
<name>LECG_CROAT</name>
<proteinExistence type="evidence at protein level"/>
<keyword id="KW-0002">3D-structure</keyword>
<keyword id="KW-0106">Calcium</keyword>
<keyword id="KW-0903">Direct protein sequencing</keyword>
<keyword id="KW-1015">Disulfide bond</keyword>
<keyword id="KW-0348">Hemagglutinin</keyword>
<keyword id="KW-0430">Lectin</keyword>
<keyword id="KW-0479">Metal-binding</keyword>
<keyword id="KW-0964">Secreted</keyword>
<feature type="chain" id="PRO_0000046644" description="C-type lectin Cal">
    <location>
        <begin position="1"/>
        <end position="135"/>
    </location>
</feature>
<feature type="domain" description="C-type lectin" evidence="1">
    <location>
        <begin position="10"/>
        <end position="132"/>
    </location>
</feature>
<feature type="short sequence motif" description="Galactose-binding" evidence="2 8 9">
    <location>
        <begin position="96"/>
        <end position="98"/>
    </location>
</feature>
<feature type="binding site" evidence="2 8 9">
    <location>
        <position position="96"/>
    </location>
    <ligand>
        <name>Ca(2+)</name>
        <dbReference type="ChEBI" id="CHEBI:29108"/>
    </ligand>
</feature>
<feature type="binding site" evidence="2 8 9">
    <location>
        <position position="98"/>
    </location>
    <ligand>
        <name>Ca(2+)</name>
        <dbReference type="ChEBI" id="CHEBI:29108"/>
    </ligand>
</feature>
<feature type="binding site" evidence="2 8 9">
    <location>
        <position position="104"/>
    </location>
    <ligand>
        <name>Ca(2+)</name>
        <dbReference type="ChEBI" id="CHEBI:29108"/>
    </ligand>
</feature>
<feature type="binding site" evidence="2 8 9">
    <location>
        <position position="119"/>
    </location>
    <ligand>
        <name>Ca(2+)</name>
        <dbReference type="ChEBI" id="CHEBI:29108"/>
    </ligand>
</feature>
<feature type="binding site" evidence="2 8 9">
    <location>
        <position position="120"/>
    </location>
    <ligand>
        <name>Ca(2+)</name>
        <dbReference type="ChEBI" id="CHEBI:29108"/>
    </ligand>
</feature>
<feature type="disulfide bond" evidence="2 8 9">
    <location>
        <begin position="3"/>
        <end position="14"/>
    </location>
</feature>
<feature type="disulfide bond" evidence="2 8 9">
    <location>
        <begin position="31"/>
        <end position="131"/>
    </location>
</feature>
<feature type="disulfide bond" evidence="2 8 9">
    <location>
        <begin position="38"/>
        <end position="133"/>
    </location>
</feature>
<feature type="disulfide bond" description="Interchain" evidence="2 8 9">
    <location>
        <position position="86"/>
    </location>
</feature>
<feature type="disulfide bond" evidence="2 8 9">
    <location>
        <begin position="106"/>
        <end position="123"/>
    </location>
</feature>
<feature type="strand" evidence="10">
    <location>
        <begin position="7"/>
        <end position="10"/>
    </location>
</feature>
<feature type="strand" evidence="10">
    <location>
        <begin position="13"/>
        <end position="22"/>
    </location>
</feature>
<feature type="helix" evidence="10">
    <location>
        <begin position="24"/>
        <end position="34"/>
    </location>
</feature>
<feature type="strand" evidence="10">
    <location>
        <begin position="35"/>
        <end position="40"/>
    </location>
</feature>
<feature type="helix" evidence="10">
    <location>
        <begin position="46"/>
        <end position="59"/>
    </location>
</feature>
<feature type="strand" evidence="10">
    <location>
        <begin position="66"/>
        <end position="71"/>
    </location>
</feature>
<feature type="strand" evidence="10">
    <location>
        <begin position="75"/>
        <end position="77"/>
    </location>
</feature>
<feature type="helix" evidence="10">
    <location>
        <begin position="100"/>
        <end position="102"/>
    </location>
</feature>
<feature type="strand" evidence="10">
    <location>
        <begin position="106"/>
        <end position="109"/>
    </location>
</feature>
<feature type="helix" evidence="10">
    <location>
        <begin position="111"/>
        <end position="113"/>
    </location>
</feature>
<feature type="strand" evidence="10">
    <location>
        <begin position="117"/>
        <end position="121"/>
    </location>
</feature>
<feature type="strand" evidence="10">
    <location>
        <begin position="127"/>
        <end position="133"/>
    </location>
</feature>
<sequence length="135" mass="16291">NNCPLDWLPMNGLCYKIFNQLKTWEDAEMFCRKYKPGCHLASFHRYGESLEIAEYISDYHKGQENVWIGLRDKKKDFSWEWTDRSCTDYLTWDKNQPDHYQNKEFCVELVSLTGYRLWNDQVCESKDAFLCQCKF</sequence>
<dbReference type="PIR" id="A38609">
    <property type="entry name" value="A38609"/>
</dbReference>
<dbReference type="PDB" id="1JZN">
    <property type="method" value="X-ray"/>
    <property type="resolution" value="2.20 A"/>
    <property type="chains" value="A/B/C/D/E=1-135"/>
</dbReference>
<dbReference type="PDB" id="1MUQ">
    <property type="method" value="X-ray"/>
    <property type="resolution" value="2.30 A"/>
    <property type="chains" value="A/B/C/D/E=1-135"/>
</dbReference>
<dbReference type="PDBsum" id="1JZN"/>
<dbReference type="PDBsum" id="1MUQ"/>
<dbReference type="SMR" id="P21963"/>
<dbReference type="UniLectin" id="P21963"/>
<dbReference type="EvolutionaryTrace" id="P21963"/>
<dbReference type="GO" id="GO:0005576">
    <property type="term" value="C:extracellular region"/>
    <property type="evidence" value="ECO:0007669"/>
    <property type="project" value="UniProtKB-SubCell"/>
</dbReference>
<dbReference type="GO" id="GO:0030246">
    <property type="term" value="F:carbohydrate binding"/>
    <property type="evidence" value="ECO:0007669"/>
    <property type="project" value="UniProtKB-KW"/>
</dbReference>
<dbReference type="GO" id="GO:0046872">
    <property type="term" value="F:metal ion binding"/>
    <property type="evidence" value="ECO:0007669"/>
    <property type="project" value="UniProtKB-KW"/>
</dbReference>
<dbReference type="CDD" id="cd03594">
    <property type="entry name" value="CLECT_REG-1_like"/>
    <property type="match status" value="1"/>
</dbReference>
<dbReference type="FunFam" id="3.10.100.10:FF:000015">
    <property type="entry name" value="C-type lectin Cal"/>
    <property type="match status" value="1"/>
</dbReference>
<dbReference type="Gene3D" id="3.10.100.10">
    <property type="entry name" value="Mannose-Binding Protein A, subunit A"/>
    <property type="match status" value="1"/>
</dbReference>
<dbReference type="InterPro" id="IPR001304">
    <property type="entry name" value="C-type_lectin-like"/>
</dbReference>
<dbReference type="InterPro" id="IPR016186">
    <property type="entry name" value="C-type_lectin-like/link_sf"/>
</dbReference>
<dbReference type="InterPro" id="IPR050111">
    <property type="entry name" value="C-type_lectin/snaclec_domain"/>
</dbReference>
<dbReference type="InterPro" id="IPR018378">
    <property type="entry name" value="C-type_lectin_CS"/>
</dbReference>
<dbReference type="InterPro" id="IPR016187">
    <property type="entry name" value="CTDL_fold"/>
</dbReference>
<dbReference type="PANTHER" id="PTHR22803">
    <property type="entry name" value="MANNOSE, PHOSPHOLIPASE, LECTIN RECEPTOR RELATED"/>
    <property type="match status" value="1"/>
</dbReference>
<dbReference type="Pfam" id="PF00059">
    <property type="entry name" value="Lectin_C"/>
    <property type="match status" value="1"/>
</dbReference>
<dbReference type="PRINTS" id="PR01504">
    <property type="entry name" value="PNCREATITSAP"/>
</dbReference>
<dbReference type="SMART" id="SM00034">
    <property type="entry name" value="CLECT"/>
    <property type="match status" value="1"/>
</dbReference>
<dbReference type="SUPFAM" id="SSF56436">
    <property type="entry name" value="C-type lectin-like"/>
    <property type="match status" value="1"/>
</dbReference>
<dbReference type="PROSITE" id="PS00615">
    <property type="entry name" value="C_TYPE_LECTIN_1"/>
    <property type="match status" value="1"/>
</dbReference>
<dbReference type="PROSITE" id="PS50041">
    <property type="entry name" value="C_TYPE_LECTIN_2"/>
    <property type="match status" value="1"/>
</dbReference>